<name>RISB_HELPY</name>
<keyword id="KW-1185">Reference proteome</keyword>
<keyword id="KW-0686">Riboflavin biosynthesis</keyword>
<keyword id="KW-0808">Transferase</keyword>
<feature type="chain" id="PRO_0000134763" description="6,7-dimethyl-8-ribityllumazine synthase">
    <location>
        <begin position="1"/>
        <end position="156"/>
    </location>
</feature>
<feature type="active site" description="Proton donor" evidence="1">
    <location>
        <position position="89"/>
    </location>
</feature>
<feature type="binding site" evidence="1">
    <location>
        <position position="23"/>
    </location>
    <ligand>
        <name>5-amino-6-(D-ribitylamino)uracil</name>
        <dbReference type="ChEBI" id="CHEBI:15934"/>
    </ligand>
</feature>
<feature type="binding site" evidence="1">
    <location>
        <begin position="57"/>
        <end position="59"/>
    </location>
    <ligand>
        <name>5-amino-6-(D-ribitylamino)uracil</name>
        <dbReference type="ChEBI" id="CHEBI:15934"/>
    </ligand>
</feature>
<feature type="binding site" evidence="1">
    <location>
        <begin position="81"/>
        <end position="83"/>
    </location>
    <ligand>
        <name>5-amino-6-(D-ribitylamino)uracil</name>
        <dbReference type="ChEBI" id="CHEBI:15934"/>
    </ligand>
</feature>
<feature type="binding site" evidence="1">
    <location>
        <begin position="86"/>
        <end position="87"/>
    </location>
    <ligand>
        <name>(2S)-2-hydroxy-3-oxobutyl phosphate</name>
        <dbReference type="ChEBI" id="CHEBI:58830"/>
    </ligand>
</feature>
<feature type="binding site" evidence="1">
    <location>
        <position position="114"/>
    </location>
    <ligand>
        <name>5-amino-6-(D-ribitylamino)uracil</name>
        <dbReference type="ChEBI" id="CHEBI:15934"/>
    </ligand>
</feature>
<feature type="binding site" evidence="1">
    <location>
        <position position="128"/>
    </location>
    <ligand>
        <name>(2S)-2-hydroxy-3-oxobutyl phosphate</name>
        <dbReference type="ChEBI" id="CHEBI:58830"/>
    </ligand>
</feature>
<protein>
    <recommendedName>
        <fullName evidence="1">6,7-dimethyl-8-ribityllumazine synthase</fullName>
        <shortName evidence="1">DMRL synthase</shortName>
        <shortName evidence="1">LS</shortName>
        <shortName evidence="1">Lumazine synthase</shortName>
        <ecNumber evidence="1">2.5.1.78</ecNumber>
    </recommendedName>
</protein>
<gene>
    <name evidence="1" type="primary">ribH</name>
    <name type="synonym">ribE</name>
    <name type="ordered locus">HP_0002</name>
</gene>
<comment type="function">
    <text evidence="1">Catalyzes the formation of 6,7-dimethyl-8-ribityllumazine by condensation of 5-amino-6-(D-ribitylamino)uracil with 3,4-dihydroxy-2-butanone 4-phosphate. This is the penultimate step in the biosynthesis of riboflavin.</text>
</comment>
<comment type="catalytic activity">
    <reaction evidence="1">
        <text>(2S)-2-hydroxy-3-oxobutyl phosphate + 5-amino-6-(D-ribitylamino)uracil = 6,7-dimethyl-8-(1-D-ribityl)lumazine + phosphate + 2 H2O + H(+)</text>
        <dbReference type="Rhea" id="RHEA:26152"/>
        <dbReference type="ChEBI" id="CHEBI:15377"/>
        <dbReference type="ChEBI" id="CHEBI:15378"/>
        <dbReference type="ChEBI" id="CHEBI:15934"/>
        <dbReference type="ChEBI" id="CHEBI:43474"/>
        <dbReference type="ChEBI" id="CHEBI:58201"/>
        <dbReference type="ChEBI" id="CHEBI:58830"/>
        <dbReference type="EC" id="2.5.1.78"/>
    </reaction>
</comment>
<comment type="pathway">
    <text evidence="1">Cofactor biosynthesis; riboflavin biosynthesis; riboflavin from 2-hydroxy-3-oxobutyl phosphate and 5-amino-6-(D-ribitylamino)uracil: step 1/2.</text>
</comment>
<comment type="similarity">
    <text evidence="1">Belongs to the DMRL synthase family.</text>
</comment>
<dbReference type="EC" id="2.5.1.78" evidence="1"/>
<dbReference type="EMBL" id="AE000511">
    <property type="protein sequence ID" value="AAD07075.1"/>
    <property type="molecule type" value="Genomic_DNA"/>
</dbReference>
<dbReference type="PIR" id="B64520">
    <property type="entry name" value="B64520"/>
</dbReference>
<dbReference type="RefSeq" id="NP_206804.1">
    <property type="nucleotide sequence ID" value="NC_000915.1"/>
</dbReference>
<dbReference type="RefSeq" id="WP_001165637.1">
    <property type="nucleotide sequence ID" value="NC_018939.1"/>
</dbReference>
<dbReference type="SMR" id="O24854"/>
<dbReference type="DIP" id="DIP-3051N"/>
<dbReference type="FunCoup" id="O24854">
    <property type="interactions" value="373"/>
</dbReference>
<dbReference type="IntAct" id="O24854">
    <property type="interactions" value="4"/>
</dbReference>
<dbReference type="MINT" id="O24854"/>
<dbReference type="STRING" id="85962.HP_0002"/>
<dbReference type="PaxDb" id="85962-C694_00010"/>
<dbReference type="EnsemblBacteria" id="AAD07075">
    <property type="protein sequence ID" value="AAD07075"/>
    <property type="gene ID" value="HP_0002"/>
</dbReference>
<dbReference type="KEGG" id="heo:C694_00010"/>
<dbReference type="KEGG" id="hpy:HP_0002"/>
<dbReference type="PATRIC" id="fig|85962.47.peg.2"/>
<dbReference type="eggNOG" id="COG0054">
    <property type="taxonomic scope" value="Bacteria"/>
</dbReference>
<dbReference type="InParanoid" id="O24854"/>
<dbReference type="OrthoDB" id="9809709at2"/>
<dbReference type="PhylomeDB" id="O24854"/>
<dbReference type="BRENDA" id="2.5.1.78">
    <property type="organism ID" value="2604"/>
</dbReference>
<dbReference type="UniPathway" id="UPA00275">
    <property type="reaction ID" value="UER00404"/>
</dbReference>
<dbReference type="Proteomes" id="UP000000429">
    <property type="component" value="Chromosome"/>
</dbReference>
<dbReference type="GO" id="GO:0005737">
    <property type="term" value="C:cytoplasm"/>
    <property type="evidence" value="ECO:0000318"/>
    <property type="project" value="GO_Central"/>
</dbReference>
<dbReference type="GO" id="GO:0005829">
    <property type="term" value="C:cytosol"/>
    <property type="evidence" value="ECO:0000318"/>
    <property type="project" value="GO_Central"/>
</dbReference>
<dbReference type="GO" id="GO:0009349">
    <property type="term" value="C:riboflavin synthase complex"/>
    <property type="evidence" value="ECO:0007669"/>
    <property type="project" value="InterPro"/>
</dbReference>
<dbReference type="GO" id="GO:0000906">
    <property type="term" value="F:6,7-dimethyl-8-ribityllumazine synthase activity"/>
    <property type="evidence" value="ECO:0000318"/>
    <property type="project" value="GO_Central"/>
</dbReference>
<dbReference type="GO" id="GO:0009231">
    <property type="term" value="P:riboflavin biosynthetic process"/>
    <property type="evidence" value="ECO:0000318"/>
    <property type="project" value="GO_Central"/>
</dbReference>
<dbReference type="CDD" id="cd09209">
    <property type="entry name" value="Lumazine_synthase-I"/>
    <property type="match status" value="1"/>
</dbReference>
<dbReference type="FunFam" id="3.40.50.960:FF:000001">
    <property type="entry name" value="6,7-dimethyl-8-ribityllumazine synthase"/>
    <property type="match status" value="1"/>
</dbReference>
<dbReference type="Gene3D" id="3.40.50.960">
    <property type="entry name" value="Lumazine/riboflavin synthase"/>
    <property type="match status" value="1"/>
</dbReference>
<dbReference type="HAMAP" id="MF_00178">
    <property type="entry name" value="Lumazine_synth"/>
    <property type="match status" value="1"/>
</dbReference>
<dbReference type="InterPro" id="IPR034964">
    <property type="entry name" value="LS"/>
</dbReference>
<dbReference type="InterPro" id="IPR002180">
    <property type="entry name" value="LS/RS"/>
</dbReference>
<dbReference type="InterPro" id="IPR036467">
    <property type="entry name" value="LS/RS_sf"/>
</dbReference>
<dbReference type="NCBIfam" id="TIGR00114">
    <property type="entry name" value="lumazine-synth"/>
    <property type="match status" value="1"/>
</dbReference>
<dbReference type="PANTHER" id="PTHR21058:SF0">
    <property type="entry name" value="6,7-DIMETHYL-8-RIBITYLLUMAZINE SYNTHASE"/>
    <property type="match status" value="1"/>
</dbReference>
<dbReference type="PANTHER" id="PTHR21058">
    <property type="entry name" value="6,7-DIMETHYL-8-RIBITYLLUMAZINE SYNTHASE DMRL SYNTHASE LUMAZINE SYNTHASE"/>
    <property type="match status" value="1"/>
</dbReference>
<dbReference type="Pfam" id="PF00885">
    <property type="entry name" value="DMRL_synthase"/>
    <property type="match status" value="1"/>
</dbReference>
<dbReference type="SUPFAM" id="SSF52121">
    <property type="entry name" value="Lumazine synthase"/>
    <property type="match status" value="1"/>
</dbReference>
<evidence type="ECO:0000255" key="1">
    <source>
        <dbReference type="HAMAP-Rule" id="MF_00178"/>
    </source>
</evidence>
<reference key="1">
    <citation type="journal article" date="1997" name="Nature">
        <title>The complete genome sequence of the gastric pathogen Helicobacter pylori.</title>
        <authorList>
            <person name="Tomb J.-F."/>
            <person name="White O."/>
            <person name="Kerlavage A.R."/>
            <person name="Clayton R.A."/>
            <person name="Sutton G.G."/>
            <person name="Fleischmann R.D."/>
            <person name="Ketchum K.A."/>
            <person name="Klenk H.-P."/>
            <person name="Gill S.R."/>
            <person name="Dougherty B.A."/>
            <person name="Nelson K.E."/>
            <person name="Quackenbush J."/>
            <person name="Zhou L."/>
            <person name="Kirkness E.F."/>
            <person name="Peterson S.N."/>
            <person name="Loftus B.J."/>
            <person name="Richardson D.L."/>
            <person name="Dodson R.J."/>
            <person name="Khalak H.G."/>
            <person name="Glodek A."/>
            <person name="McKenney K."/>
            <person name="FitzGerald L.M."/>
            <person name="Lee N."/>
            <person name="Adams M.D."/>
            <person name="Hickey E.K."/>
            <person name="Berg D.E."/>
            <person name="Gocayne J.D."/>
            <person name="Utterback T.R."/>
            <person name="Peterson J.D."/>
            <person name="Kelley J.M."/>
            <person name="Cotton M.D."/>
            <person name="Weidman J.F."/>
            <person name="Fujii C."/>
            <person name="Bowman C."/>
            <person name="Watthey L."/>
            <person name="Wallin E."/>
            <person name="Hayes W.S."/>
            <person name="Borodovsky M."/>
            <person name="Karp P.D."/>
            <person name="Smith H.O."/>
            <person name="Fraser C.M."/>
            <person name="Venter J.C."/>
        </authorList>
    </citation>
    <scope>NUCLEOTIDE SEQUENCE [LARGE SCALE GENOMIC DNA]</scope>
    <source>
        <strain>ATCC 700392 / 26695</strain>
    </source>
</reference>
<accession>O24854</accession>
<sequence>MQIIEGKLQLQGNERVAILTSRFNHIITDRLQEGAMDCFKRHGGDEDLLDIVLVPGAYELPFILDKLLESEKYDGVCVLGAIIRGGTPHFDYVSAEATKGIAHAMLKYSMPVSFGVLTTDNIEQAIERAGSKAGNKGFEAMSTLIELLSLCQTLKG</sequence>
<proteinExistence type="inferred from homology"/>
<organism>
    <name type="scientific">Helicobacter pylori (strain ATCC 700392 / 26695)</name>
    <name type="common">Campylobacter pylori</name>
    <dbReference type="NCBI Taxonomy" id="85962"/>
    <lineage>
        <taxon>Bacteria</taxon>
        <taxon>Pseudomonadati</taxon>
        <taxon>Campylobacterota</taxon>
        <taxon>Epsilonproteobacteria</taxon>
        <taxon>Campylobacterales</taxon>
        <taxon>Helicobacteraceae</taxon>
        <taxon>Helicobacter</taxon>
    </lineage>
</organism>